<reference key="1">
    <citation type="journal article" date="1999" name="Nature">
        <title>Sequence and analysis of chromosome 4 of the plant Arabidopsis thaliana.</title>
        <authorList>
            <person name="Mayer K.F.X."/>
            <person name="Schueller C."/>
            <person name="Wambutt R."/>
            <person name="Murphy G."/>
            <person name="Volckaert G."/>
            <person name="Pohl T."/>
            <person name="Duesterhoeft A."/>
            <person name="Stiekema W."/>
            <person name="Entian K.-D."/>
            <person name="Terryn N."/>
            <person name="Harris B."/>
            <person name="Ansorge W."/>
            <person name="Brandt P."/>
            <person name="Grivell L.A."/>
            <person name="Rieger M."/>
            <person name="Weichselgartner M."/>
            <person name="de Simone V."/>
            <person name="Obermaier B."/>
            <person name="Mache R."/>
            <person name="Mueller M."/>
            <person name="Kreis M."/>
            <person name="Delseny M."/>
            <person name="Puigdomenech P."/>
            <person name="Watson M."/>
            <person name="Schmidtheini T."/>
            <person name="Reichert B."/>
            <person name="Portetelle D."/>
            <person name="Perez-Alonso M."/>
            <person name="Boutry M."/>
            <person name="Bancroft I."/>
            <person name="Vos P."/>
            <person name="Hoheisel J."/>
            <person name="Zimmermann W."/>
            <person name="Wedler H."/>
            <person name="Ridley P."/>
            <person name="Langham S.-A."/>
            <person name="McCullagh B."/>
            <person name="Bilham L."/>
            <person name="Robben J."/>
            <person name="van der Schueren J."/>
            <person name="Grymonprez B."/>
            <person name="Chuang Y.-J."/>
            <person name="Vandenbussche F."/>
            <person name="Braeken M."/>
            <person name="Weltjens I."/>
            <person name="Voet M."/>
            <person name="Bastiaens I."/>
            <person name="Aert R."/>
            <person name="Defoor E."/>
            <person name="Weitzenegger T."/>
            <person name="Bothe G."/>
            <person name="Ramsperger U."/>
            <person name="Hilbert H."/>
            <person name="Braun M."/>
            <person name="Holzer E."/>
            <person name="Brandt A."/>
            <person name="Peters S."/>
            <person name="van Staveren M."/>
            <person name="Dirkse W."/>
            <person name="Mooijman P."/>
            <person name="Klein Lankhorst R."/>
            <person name="Rose M."/>
            <person name="Hauf J."/>
            <person name="Koetter P."/>
            <person name="Berneiser S."/>
            <person name="Hempel S."/>
            <person name="Feldpausch M."/>
            <person name="Lamberth S."/>
            <person name="Van den Daele H."/>
            <person name="De Keyser A."/>
            <person name="Buysshaert C."/>
            <person name="Gielen J."/>
            <person name="Villarroel R."/>
            <person name="De Clercq R."/>
            <person name="van Montagu M."/>
            <person name="Rogers J."/>
            <person name="Cronin A."/>
            <person name="Quail M.A."/>
            <person name="Bray-Allen S."/>
            <person name="Clark L."/>
            <person name="Doggett J."/>
            <person name="Hall S."/>
            <person name="Kay M."/>
            <person name="Lennard N."/>
            <person name="McLay K."/>
            <person name="Mayes R."/>
            <person name="Pettett A."/>
            <person name="Rajandream M.A."/>
            <person name="Lyne M."/>
            <person name="Benes V."/>
            <person name="Rechmann S."/>
            <person name="Borkova D."/>
            <person name="Bloecker H."/>
            <person name="Scharfe M."/>
            <person name="Grimm M."/>
            <person name="Loehnert T.-H."/>
            <person name="Dose S."/>
            <person name="de Haan M."/>
            <person name="Maarse A.C."/>
            <person name="Schaefer M."/>
            <person name="Mueller-Auer S."/>
            <person name="Gabel C."/>
            <person name="Fuchs M."/>
            <person name="Fartmann B."/>
            <person name="Granderath K."/>
            <person name="Dauner D."/>
            <person name="Herzl A."/>
            <person name="Neumann S."/>
            <person name="Argiriou A."/>
            <person name="Vitale D."/>
            <person name="Liguori R."/>
            <person name="Piravandi E."/>
            <person name="Massenet O."/>
            <person name="Quigley F."/>
            <person name="Clabauld G."/>
            <person name="Muendlein A."/>
            <person name="Felber R."/>
            <person name="Schnabl S."/>
            <person name="Hiller R."/>
            <person name="Schmidt W."/>
            <person name="Lecharny A."/>
            <person name="Aubourg S."/>
            <person name="Chefdor F."/>
            <person name="Cooke R."/>
            <person name="Berger C."/>
            <person name="Monfort A."/>
            <person name="Casacuberta E."/>
            <person name="Gibbons T."/>
            <person name="Weber N."/>
            <person name="Vandenbol M."/>
            <person name="Bargues M."/>
            <person name="Terol J."/>
            <person name="Torres A."/>
            <person name="Perez-Perez A."/>
            <person name="Purnelle B."/>
            <person name="Bent E."/>
            <person name="Johnson S."/>
            <person name="Tacon D."/>
            <person name="Jesse T."/>
            <person name="Heijnen L."/>
            <person name="Schwarz S."/>
            <person name="Scholler P."/>
            <person name="Heber S."/>
            <person name="Francs P."/>
            <person name="Bielke C."/>
            <person name="Frishman D."/>
            <person name="Haase D."/>
            <person name="Lemcke K."/>
            <person name="Mewes H.-W."/>
            <person name="Stocker S."/>
            <person name="Zaccaria P."/>
            <person name="Bevan M."/>
            <person name="Wilson R.K."/>
            <person name="de la Bastide M."/>
            <person name="Habermann K."/>
            <person name="Parnell L."/>
            <person name="Dedhia N."/>
            <person name="Gnoj L."/>
            <person name="Schutz K."/>
            <person name="Huang E."/>
            <person name="Spiegel L."/>
            <person name="Sekhon M."/>
            <person name="Murray J."/>
            <person name="Sheet P."/>
            <person name="Cordes M."/>
            <person name="Abu-Threideh J."/>
            <person name="Stoneking T."/>
            <person name="Kalicki J."/>
            <person name="Graves T."/>
            <person name="Harmon G."/>
            <person name="Edwards J."/>
            <person name="Latreille P."/>
            <person name="Courtney L."/>
            <person name="Cloud J."/>
            <person name="Abbott A."/>
            <person name="Scott K."/>
            <person name="Johnson D."/>
            <person name="Minx P."/>
            <person name="Bentley D."/>
            <person name="Fulton B."/>
            <person name="Miller N."/>
            <person name="Greco T."/>
            <person name="Kemp K."/>
            <person name="Kramer J."/>
            <person name="Fulton L."/>
            <person name="Mardis E."/>
            <person name="Dante M."/>
            <person name="Pepin K."/>
            <person name="Hillier L.W."/>
            <person name="Nelson J."/>
            <person name="Spieth J."/>
            <person name="Ryan E."/>
            <person name="Andrews S."/>
            <person name="Geisel C."/>
            <person name="Layman D."/>
            <person name="Du H."/>
            <person name="Ali J."/>
            <person name="Berghoff A."/>
            <person name="Jones K."/>
            <person name="Drone K."/>
            <person name="Cotton M."/>
            <person name="Joshu C."/>
            <person name="Antonoiu B."/>
            <person name="Zidanic M."/>
            <person name="Strong C."/>
            <person name="Sun H."/>
            <person name="Lamar B."/>
            <person name="Yordan C."/>
            <person name="Ma P."/>
            <person name="Zhong J."/>
            <person name="Preston R."/>
            <person name="Vil D."/>
            <person name="Shekher M."/>
            <person name="Matero A."/>
            <person name="Shah R."/>
            <person name="Swaby I.K."/>
            <person name="O'Shaughnessy A."/>
            <person name="Rodriguez M."/>
            <person name="Hoffman J."/>
            <person name="Till S."/>
            <person name="Granat S."/>
            <person name="Shohdy N."/>
            <person name="Hasegawa A."/>
            <person name="Hameed A."/>
            <person name="Lodhi M."/>
            <person name="Johnson A."/>
            <person name="Chen E."/>
            <person name="Marra M.A."/>
            <person name="Martienssen R."/>
            <person name="McCombie W.R."/>
        </authorList>
    </citation>
    <scope>NUCLEOTIDE SEQUENCE [LARGE SCALE GENOMIC DNA]</scope>
    <source>
        <strain>cv. Columbia</strain>
    </source>
</reference>
<reference key="2">
    <citation type="journal article" date="2017" name="Plant J.">
        <title>Araport11: a complete reannotation of the Arabidopsis thaliana reference genome.</title>
        <authorList>
            <person name="Cheng C.Y."/>
            <person name="Krishnakumar V."/>
            <person name="Chan A.P."/>
            <person name="Thibaud-Nissen F."/>
            <person name="Schobel S."/>
            <person name="Town C.D."/>
        </authorList>
    </citation>
    <scope>GENOME REANNOTATION</scope>
    <source>
        <strain>cv. Columbia</strain>
    </source>
</reference>
<reference key="3">
    <citation type="journal article" date="2002" name="Science">
        <title>Functional annotation of a full-length Arabidopsis cDNA collection.</title>
        <authorList>
            <person name="Seki M."/>
            <person name="Narusaka M."/>
            <person name="Kamiya A."/>
            <person name="Ishida J."/>
            <person name="Satou M."/>
            <person name="Sakurai T."/>
            <person name="Nakajima M."/>
            <person name="Enju A."/>
            <person name="Akiyama K."/>
            <person name="Oono Y."/>
            <person name="Muramatsu M."/>
            <person name="Hayashizaki Y."/>
            <person name="Kawai J."/>
            <person name="Carninci P."/>
            <person name="Itoh M."/>
            <person name="Ishii Y."/>
            <person name="Arakawa T."/>
            <person name="Shibata K."/>
            <person name="Shinagawa A."/>
            <person name="Shinozaki K."/>
        </authorList>
    </citation>
    <scope>NUCLEOTIDE SEQUENCE [LARGE SCALE MRNA]</scope>
    <source>
        <strain>cv. Columbia</strain>
    </source>
</reference>
<reference key="4">
    <citation type="journal article" date="2003" name="Science">
        <title>Empirical analysis of transcriptional activity in the Arabidopsis genome.</title>
        <authorList>
            <person name="Yamada K."/>
            <person name="Lim J."/>
            <person name="Dale J.M."/>
            <person name="Chen H."/>
            <person name="Shinn P."/>
            <person name="Palm C.J."/>
            <person name="Southwick A.M."/>
            <person name="Wu H.C."/>
            <person name="Kim C.J."/>
            <person name="Nguyen M."/>
            <person name="Pham P.K."/>
            <person name="Cheuk R.F."/>
            <person name="Karlin-Newmann G."/>
            <person name="Liu S.X."/>
            <person name="Lam B."/>
            <person name="Sakano H."/>
            <person name="Wu T."/>
            <person name="Yu G."/>
            <person name="Miranda M."/>
            <person name="Quach H.L."/>
            <person name="Tripp M."/>
            <person name="Chang C.H."/>
            <person name="Lee J.M."/>
            <person name="Toriumi M.J."/>
            <person name="Chan M.M."/>
            <person name="Tang C.C."/>
            <person name="Onodera C.S."/>
            <person name="Deng J.M."/>
            <person name="Akiyama K."/>
            <person name="Ansari Y."/>
            <person name="Arakawa T."/>
            <person name="Banh J."/>
            <person name="Banno F."/>
            <person name="Bowser L."/>
            <person name="Brooks S.Y."/>
            <person name="Carninci P."/>
            <person name="Chao Q."/>
            <person name="Choy N."/>
            <person name="Enju A."/>
            <person name="Goldsmith A.D."/>
            <person name="Gurjal M."/>
            <person name="Hansen N.F."/>
            <person name="Hayashizaki Y."/>
            <person name="Johnson-Hopson C."/>
            <person name="Hsuan V.W."/>
            <person name="Iida K."/>
            <person name="Karnes M."/>
            <person name="Khan S."/>
            <person name="Koesema E."/>
            <person name="Ishida J."/>
            <person name="Jiang P.X."/>
            <person name="Jones T."/>
            <person name="Kawai J."/>
            <person name="Kamiya A."/>
            <person name="Meyers C."/>
            <person name="Nakajima M."/>
            <person name="Narusaka M."/>
            <person name="Seki M."/>
            <person name="Sakurai T."/>
            <person name="Satou M."/>
            <person name="Tamse R."/>
            <person name="Vaysberg M."/>
            <person name="Wallender E.K."/>
            <person name="Wong C."/>
            <person name="Yamamura Y."/>
            <person name="Yuan S."/>
            <person name="Shinozaki K."/>
            <person name="Davis R.W."/>
            <person name="Theologis A."/>
            <person name="Ecker J.R."/>
        </authorList>
    </citation>
    <scope>NUCLEOTIDE SEQUENCE [LARGE SCALE MRNA]</scope>
    <source>
        <strain>cv. Columbia</strain>
    </source>
</reference>
<reference key="5">
    <citation type="journal article" date="2007" name="Physiol. Plantarum">
        <title>Arabidopsis prolyl 4-hydroxylases are differentially expressed in response to hypoxia, anoxia and mechanical wounding.</title>
        <authorList>
            <person name="Vlad F."/>
            <person name="Spano T."/>
            <person name="Vlad D."/>
            <person name="Bou Daher F."/>
            <person name="Ouelhadj A."/>
            <person name="Kalaitzis P."/>
        </authorList>
    </citation>
    <scope>GENE FAMILY</scope>
    <scope>NOMENCLATURE</scope>
</reference>
<name>P4H12_ARATH</name>
<accession>Q8GXT7</accession>
<accession>O65602</accession>
<accession>Q9M0K1</accession>
<protein>
    <recommendedName>
        <fullName evidence="8">Probable prolyl 4-hydroxylase 12</fullName>
        <shortName evidence="7">AtP4H12</shortName>
        <ecNumber evidence="8">1.14.11.2</ecNumber>
    </recommendedName>
</protein>
<proteinExistence type="evidence at transcript level"/>
<dbReference type="EC" id="1.14.11.2" evidence="8"/>
<dbReference type="EMBL" id="AL022197">
    <property type="protein sequence ID" value="CAA18166.1"/>
    <property type="status" value="ALT_SEQ"/>
    <property type="molecule type" value="Genomic_DNA"/>
</dbReference>
<dbReference type="EMBL" id="AL161563">
    <property type="protein sequence ID" value="CAB81370.1"/>
    <property type="status" value="ALT_SEQ"/>
    <property type="molecule type" value="Genomic_DNA"/>
</dbReference>
<dbReference type="EMBL" id="CP002687">
    <property type="protein sequence ID" value="AEE85081.1"/>
    <property type="molecule type" value="Genomic_DNA"/>
</dbReference>
<dbReference type="EMBL" id="AK118049">
    <property type="protein sequence ID" value="BAC42680.1"/>
    <property type="molecule type" value="mRNA"/>
</dbReference>
<dbReference type="EMBL" id="BT006044">
    <property type="protein sequence ID" value="AAP06823.1"/>
    <property type="molecule type" value="mRNA"/>
</dbReference>
<dbReference type="PIR" id="H85295">
    <property type="entry name" value="H85295"/>
</dbReference>
<dbReference type="PIR" id="T05787">
    <property type="entry name" value="T05787"/>
</dbReference>
<dbReference type="RefSeq" id="NP_194290.2">
    <property type="nucleotide sequence ID" value="NM_118692.3"/>
</dbReference>
<dbReference type="SMR" id="Q8GXT7"/>
<dbReference type="BioGRID" id="13952">
    <property type="interactions" value="1"/>
</dbReference>
<dbReference type="FunCoup" id="Q8GXT7">
    <property type="interactions" value="93"/>
</dbReference>
<dbReference type="STRING" id="3702.Q8GXT7"/>
<dbReference type="GlyCosmos" id="Q8GXT7">
    <property type="glycosylation" value="1 site, No reported glycans"/>
</dbReference>
<dbReference type="GlyGen" id="Q8GXT7">
    <property type="glycosylation" value="1 site"/>
</dbReference>
<dbReference type="iPTMnet" id="Q8GXT7"/>
<dbReference type="PaxDb" id="3702-AT4G25600.1"/>
<dbReference type="ProteomicsDB" id="248811"/>
<dbReference type="EnsemblPlants" id="AT4G25600.1">
    <property type="protein sequence ID" value="AT4G25600.1"/>
    <property type="gene ID" value="AT4G25600"/>
</dbReference>
<dbReference type="GeneID" id="828665"/>
<dbReference type="Gramene" id="AT4G25600.1">
    <property type="protein sequence ID" value="AT4G25600.1"/>
    <property type="gene ID" value="AT4G25600"/>
</dbReference>
<dbReference type="KEGG" id="ath:AT4G25600"/>
<dbReference type="Araport" id="AT4G25600"/>
<dbReference type="TAIR" id="AT4G25600"/>
<dbReference type="eggNOG" id="KOG1591">
    <property type="taxonomic scope" value="Eukaryota"/>
</dbReference>
<dbReference type="HOGENOM" id="CLU_058132_5_0_1"/>
<dbReference type="InParanoid" id="Q8GXT7"/>
<dbReference type="OMA" id="IWSDCTK"/>
<dbReference type="PhylomeDB" id="Q8GXT7"/>
<dbReference type="BioCyc" id="ARA:AT4G25600-MONOMER"/>
<dbReference type="PRO" id="PR:Q8GXT7"/>
<dbReference type="Proteomes" id="UP000006548">
    <property type="component" value="Chromosome 4"/>
</dbReference>
<dbReference type="ExpressionAtlas" id="Q8GXT7">
    <property type="expression patterns" value="baseline and differential"/>
</dbReference>
<dbReference type="GO" id="GO:0005789">
    <property type="term" value="C:endoplasmic reticulum membrane"/>
    <property type="evidence" value="ECO:0007669"/>
    <property type="project" value="UniProtKB-SubCell"/>
</dbReference>
<dbReference type="GO" id="GO:0005506">
    <property type="term" value="F:iron ion binding"/>
    <property type="evidence" value="ECO:0007669"/>
    <property type="project" value="InterPro"/>
</dbReference>
<dbReference type="GO" id="GO:0031418">
    <property type="term" value="F:L-ascorbic acid binding"/>
    <property type="evidence" value="ECO:0007669"/>
    <property type="project" value="InterPro"/>
</dbReference>
<dbReference type="GO" id="GO:0004656">
    <property type="term" value="F:procollagen-proline 4-dioxygenase activity"/>
    <property type="evidence" value="ECO:0007669"/>
    <property type="project" value="UniProtKB-EC"/>
</dbReference>
<dbReference type="FunFam" id="2.60.120.620:FF:000029">
    <property type="entry name" value="Probable prolyl 4-hydroxylase 12"/>
    <property type="match status" value="1"/>
</dbReference>
<dbReference type="Gene3D" id="2.60.120.620">
    <property type="entry name" value="q2cbj1_9rhob like domain"/>
    <property type="match status" value="1"/>
</dbReference>
<dbReference type="InterPro" id="IPR045054">
    <property type="entry name" value="P4HA-like"/>
</dbReference>
<dbReference type="InterPro" id="IPR006620">
    <property type="entry name" value="Pro_4_hyd_alph"/>
</dbReference>
<dbReference type="InterPro" id="IPR003582">
    <property type="entry name" value="ShKT_dom"/>
</dbReference>
<dbReference type="PANTHER" id="PTHR10869:SF102">
    <property type="entry name" value="PROLYL 4-HYDROXYLASE 12-RELATED"/>
    <property type="match status" value="1"/>
</dbReference>
<dbReference type="PANTHER" id="PTHR10869">
    <property type="entry name" value="PROLYL 4-HYDROXYLASE ALPHA SUBUNIT"/>
    <property type="match status" value="1"/>
</dbReference>
<dbReference type="SMART" id="SM00702">
    <property type="entry name" value="P4Hc"/>
    <property type="match status" value="1"/>
</dbReference>
<dbReference type="SMART" id="SM00254">
    <property type="entry name" value="ShKT"/>
    <property type="match status" value="1"/>
</dbReference>
<dbReference type="PROSITE" id="PS51670">
    <property type="entry name" value="SHKT"/>
    <property type="match status" value="1"/>
</dbReference>
<keyword id="KW-0223">Dioxygenase</keyword>
<keyword id="KW-1015">Disulfide bond</keyword>
<keyword id="KW-0256">Endoplasmic reticulum</keyword>
<keyword id="KW-0325">Glycoprotein</keyword>
<keyword id="KW-0408">Iron</keyword>
<keyword id="KW-0472">Membrane</keyword>
<keyword id="KW-0479">Metal-binding</keyword>
<keyword id="KW-0560">Oxidoreductase</keyword>
<keyword id="KW-1185">Reference proteome</keyword>
<keyword id="KW-0735">Signal-anchor</keyword>
<keyword id="KW-0812">Transmembrane</keyword>
<keyword id="KW-1133">Transmembrane helix</keyword>
<comment type="function">
    <text evidence="2">Catalyzes the post-translational formation of 4-hydroxyproline in -Xaa-Pro-Gly- sequences in proline-rich peptide sequences of plant glycoproteins and other proteins. Hydroxyprolines are important constituent of many plant cell wall glycoproteins such as extensins, hydroxyproline-rich glycoproteins, lectins and arabinogalactan proteins.</text>
</comment>
<comment type="catalytic activity">
    <reaction evidence="2">
        <text>L-prolyl-[collagen] + 2-oxoglutarate + O2 = trans-4-hydroxy-L-prolyl-[collagen] + succinate + CO2</text>
        <dbReference type="Rhea" id="RHEA:18945"/>
        <dbReference type="Rhea" id="RHEA-COMP:11676"/>
        <dbReference type="Rhea" id="RHEA-COMP:11680"/>
        <dbReference type="ChEBI" id="CHEBI:15379"/>
        <dbReference type="ChEBI" id="CHEBI:16526"/>
        <dbReference type="ChEBI" id="CHEBI:16810"/>
        <dbReference type="ChEBI" id="CHEBI:30031"/>
        <dbReference type="ChEBI" id="CHEBI:50342"/>
        <dbReference type="ChEBI" id="CHEBI:61965"/>
        <dbReference type="EC" id="1.14.11.2"/>
    </reaction>
</comment>
<comment type="cofactor">
    <cofactor evidence="1">
        <name>Fe(2+)</name>
        <dbReference type="ChEBI" id="CHEBI:29033"/>
    </cofactor>
    <text evidence="1">Binds 1 Fe(2+) ion per subunit.</text>
</comment>
<comment type="cofactor">
    <cofactor evidence="3">
        <name>L-ascorbate</name>
        <dbReference type="ChEBI" id="CHEBI:38290"/>
    </cofactor>
</comment>
<comment type="subcellular location">
    <subcellularLocation>
        <location evidence="2">Endoplasmic reticulum membrane</location>
        <topology evidence="2">Single-pass type II membrane protein</topology>
    </subcellularLocation>
</comment>
<comment type="similarity">
    <text evidence="8">Belongs to the P4HA family.</text>
</comment>
<comment type="sequence caution" evidence="8">
    <conflict type="erroneous gene model prediction">
        <sequence resource="EMBL-CDS" id="CAA18166"/>
    </conflict>
</comment>
<comment type="sequence caution" evidence="8">
    <conflict type="erroneous gene model prediction">
        <sequence resource="EMBL-CDS" id="CAB81370"/>
    </conflict>
</comment>
<gene>
    <name evidence="7" type="primary">P4H12</name>
    <name type="ordered locus">At4g25600</name>
    <name type="ORF">M7J2.30</name>
</gene>
<organism>
    <name type="scientific">Arabidopsis thaliana</name>
    <name type="common">Mouse-ear cress</name>
    <dbReference type="NCBI Taxonomy" id="3702"/>
    <lineage>
        <taxon>Eukaryota</taxon>
        <taxon>Viridiplantae</taxon>
        <taxon>Streptophyta</taxon>
        <taxon>Embryophyta</taxon>
        <taxon>Tracheophyta</taxon>
        <taxon>Spermatophyta</taxon>
        <taxon>Magnoliopsida</taxon>
        <taxon>eudicotyledons</taxon>
        <taxon>Gunneridae</taxon>
        <taxon>Pentapetalae</taxon>
        <taxon>rosids</taxon>
        <taxon>malvids</taxon>
        <taxon>Brassicales</taxon>
        <taxon>Brassicaceae</taxon>
        <taxon>Camelineae</taxon>
        <taxon>Arabidopsis</taxon>
    </lineage>
</organism>
<sequence length="291" mass="32173">MACLSRIFLILMITMSSSSPPFCSGGSRKELRDKEITSKSDDTQASYVLGSKFVDPTRVLQLSWLPRVFLYRGFLSEEECDHLISLRKETTEVYSVDADGKTQLDPVVAGIEEKVSAWTFLPGENGGSIKVRSYTSEKSGKKLDYFGEEPSSVLHESLLATVVLYLSNTTQGGELLFPNSEMKPKNSCLEGGNILRPVKGNAILFFTRLLNASLDGKSTHLRCPVVKGELLVATKLIYAKKQARIEESGECSDEDENCGRWAKLGECKKNPVYMIGSPDYYGTCRKSCNAC</sequence>
<feature type="chain" id="PRO_0000429345" description="Probable prolyl 4-hydroxylase 12">
    <location>
        <begin position="1"/>
        <end position="291"/>
    </location>
</feature>
<feature type="topological domain" description="Cytoplasmic" evidence="8">
    <location>
        <begin position="1"/>
        <end position="156"/>
    </location>
</feature>
<feature type="transmembrane region" description="Helical; Signal-anchor for type II membrane protein" evidence="4">
    <location>
        <begin position="157"/>
        <end position="173"/>
    </location>
</feature>
<feature type="topological domain" description="Lumenal" evidence="8">
    <location>
        <begin position="174"/>
        <end position="291"/>
    </location>
</feature>
<feature type="domain" description="Fe2OG dioxygenase">
    <location>
        <begin position="125"/>
        <end position="239"/>
    </location>
</feature>
<feature type="domain" description="ShKT" evidence="6">
    <location>
        <begin position="251"/>
        <end position="291"/>
    </location>
</feature>
<feature type="binding site" evidence="4">
    <location>
        <position position="142"/>
    </location>
    <ligand>
        <name>Fe cation</name>
        <dbReference type="ChEBI" id="CHEBI:24875"/>
    </ligand>
</feature>
<feature type="binding site" evidence="1">
    <location>
        <position position="144"/>
    </location>
    <ligand>
        <name>Fe cation</name>
        <dbReference type="ChEBI" id="CHEBI:24875"/>
    </ligand>
</feature>
<feature type="binding site" evidence="1">
    <location>
        <position position="220"/>
    </location>
    <ligand>
        <name>Fe cation</name>
        <dbReference type="ChEBI" id="CHEBI:24875"/>
    </ligand>
</feature>
<feature type="glycosylation site" description="N-linked (GlcNAc...) asparagine" evidence="5">
    <location>
        <position position="211"/>
    </location>
</feature>
<feature type="disulfide bond" evidence="6">
    <location>
        <begin position="251"/>
        <end position="291"/>
    </location>
</feature>
<feature type="disulfide bond" evidence="6">
    <location>
        <begin position="258"/>
        <end position="284"/>
    </location>
</feature>
<feature type="disulfide bond" evidence="6">
    <location>
        <begin position="267"/>
        <end position="288"/>
    </location>
</feature>
<evidence type="ECO:0000250" key="1"/>
<evidence type="ECO:0000250" key="2">
    <source>
        <dbReference type="UniProtKB" id="F4JAU3"/>
    </source>
</evidence>
<evidence type="ECO:0000250" key="3">
    <source>
        <dbReference type="UniProtKB" id="Q86KR9"/>
    </source>
</evidence>
<evidence type="ECO:0000255" key="4"/>
<evidence type="ECO:0000255" key="5">
    <source>
        <dbReference type="PROSITE-ProRule" id="PRU00498"/>
    </source>
</evidence>
<evidence type="ECO:0000255" key="6">
    <source>
        <dbReference type="PROSITE-ProRule" id="PRU01005"/>
    </source>
</evidence>
<evidence type="ECO:0000303" key="7">
    <source ref="5"/>
</evidence>
<evidence type="ECO:0000305" key="8"/>